<accession>P20074</accession>
<dbReference type="EC" id="2.3.1.28"/>
<dbReference type="PIR" id="JQ0375">
    <property type="entry name" value="JQ0375"/>
</dbReference>
<dbReference type="SMR" id="P20074"/>
<dbReference type="KEGG" id="ag:P20074"/>
<dbReference type="GO" id="GO:0008811">
    <property type="term" value="F:chloramphenicol O-acetyltransferase activity"/>
    <property type="evidence" value="ECO:0007669"/>
    <property type="project" value="UniProtKB-EC"/>
</dbReference>
<dbReference type="GO" id="GO:0046677">
    <property type="term" value="P:response to antibiotic"/>
    <property type="evidence" value="ECO:0007669"/>
    <property type="project" value="UniProtKB-KW"/>
</dbReference>
<dbReference type="Gene3D" id="3.30.559.10">
    <property type="entry name" value="Chloramphenicol acetyltransferase-like domain"/>
    <property type="match status" value="1"/>
</dbReference>
<dbReference type="InterPro" id="IPR023213">
    <property type="entry name" value="CAT-like_dom_sf"/>
</dbReference>
<dbReference type="InterPro" id="IPR018372">
    <property type="entry name" value="Chloramphenicol_AcTrfase_AS"/>
</dbReference>
<dbReference type="InterPro" id="IPR001707">
    <property type="entry name" value="Cmp_AcTrfase"/>
</dbReference>
<dbReference type="NCBIfam" id="NF000491">
    <property type="entry name" value="chloram_CatA"/>
    <property type="match status" value="1"/>
</dbReference>
<dbReference type="PANTHER" id="PTHR38474:SF2">
    <property type="entry name" value="CHLORAMPHENICOL ACETYLTRANSFERASE"/>
    <property type="match status" value="1"/>
</dbReference>
<dbReference type="PANTHER" id="PTHR38474">
    <property type="entry name" value="SLR0299 PROTEIN"/>
    <property type="match status" value="1"/>
</dbReference>
<dbReference type="Pfam" id="PF00302">
    <property type="entry name" value="CAT"/>
    <property type="match status" value="1"/>
</dbReference>
<dbReference type="PIRSF" id="PIRSF000440">
    <property type="entry name" value="CAT"/>
    <property type="match status" value="1"/>
</dbReference>
<dbReference type="SMART" id="SM01059">
    <property type="entry name" value="CAT"/>
    <property type="match status" value="1"/>
</dbReference>
<dbReference type="SUPFAM" id="SSF52777">
    <property type="entry name" value="CoA-dependent acyltransferases"/>
    <property type="match status" value="1"/>
</dbReference>
<dbReference type="PROSITE" id="PS00100">
    <property type="entry name" value="CAT"/>
    <property type="match status" value="1"/>
</dbReference>
<comment type="function">
    <text>This enzyme is an effector of chloramphenicol resistance in bacteria.</text>
</comment>
<comment type="catalytic activity">
    <reaction evidence="1">
        <text>chloramphenicol + acetyl-CoA = chloramphenicol 3-acetate + CoA</text>
        <dbReference type="Rhea" id="RHEA:18421"/>
        <dbReference type="ChEBI" id="CHEBI:16730"/>
        <dbReference type="ChEBI" id="CHEBI:17698"/>
        <dbReference type="ChEBI" id="CHEBI:57287"/>
        <dbReference type="ChEBI" id="CHEBI:57288"/>
        <dbReference type="EC" id="2.3.1.28"/>
    </reaction>
</comment>
<comment type="subunit">
    <text>Homotrimer.</text>
</comment>
<comment type="similarity">
    <text evidence="2">Belongs to the chloramphenicol acetyltransferase family.</text>
</comment>
<keyword id="KW-0012">Acyltransferase</keyword>
<keyword id="KW-0046">Antibiotic resistance</keyword>
<keyword id="KW-0808">Transferase</keyword>
<evidence type="ECO:0000255" key="1">
    <source>
        <dbReference type="PROSITE-ProRule" id="PRU10021"/>
    </source>
</evidence>
<evidence type="ECO:0000305" key="2"/>
<organism>
    <name type="scientific">Streptomyces acrimycini</name>
    <dbReference type="NCBI Taxonomy" id="1884"/>
    <lineage>
        <taxon>Bacteria</taxon>
        <taxon>Bacillati</taxon>
        <taxon>Actinomycetota</taxon>
        <taxon>Actinomycetes</taxon>
        <taxon>Kitasatosporales</taxon>
        <taxon>Streptomycetaceae</taxon>
        <taxon>Streptomyces</taxon>
    </lineage>
</organism>
<feature type="chain" id="PRO_0000165878" description="Chloramphenicol acetyltransferase">
    <location>
        <begin position="1"/>
        <end position="220"/>
    </location>
</feature>
<feature type="active site" description="Proton acceptor" evidence="1">
    <location>
        <position position="195"/>
    </location>
</feature>
<proteinExistence type="inferred from homology"/>
<gene>
    <name type="primary">cat</name>
</gene>
<sequence length="220" mass="24936">MDAPIPTPAPIDLDTWPRRQHFDHYRRRVPCTYAMTVEVDVTAFAAALRRSPRKSYLAQVWALATVVNRHEEFRMCLNSSGDPAVWPVVHPAFTVFNPERETFACLWAPYDPDFGTFHDTAAPLLAEHSRATDFFPQGNPPPNAFDVSSLPWVSFTGFTLDIRDGWDHLAPIFTLGRYTERDTRLLLPLSVQIHHAAADGFHTARLTNELQTLLADPAWL</sequence>
<protein>
    <recommendedName>
        <fullName>Chloramphenicol acetyltransferase</fullName>
        <shortName>CAT</shortName>
        <ecNumber>2.3.1.28</ecNumber>
    </recommendedName>
</protein>
<name>CAT_STRAC</name>
<reference key="1">
    <citation type="journal article" date="1989" name="Gene">
        <title>Nucleotide sequence of the chloramphenicol acetyltransferase gene of Streptomyces acrimycini.</title>
        <authorList>
            <person name="Murray I.A."/>
            <person name="Gil J.A."/>
            <person name="Hopwood D.A."/>
            <person name="Shaw W.V."/>
        </authorList>
    </citation>
    <scope>NUCLEOTIDE SEQUENCE [GENOMIC DNA]</scope>
</reference>